<evidence type="ECO:0000255" key="1">
    <source>
        <dbReference type="HAMAP-Rule" id="MF_01204"/>
    </source>
</evidence>
<gene>
    <name evidence="1" type="primary">rutE</name>
    <name type="ordered locus">KPK_3524</name>
</gene>
<keyword id="KW-0285">Flavoprotein</keyword>
<keyword id="KW-0288">FMN</keyword>
<keyword id="KW-0520">NAD</keyword>
<keyword id="KW-0521">NADP</keyword>
<keyword id="KW-0560">Oxidoreductase</keyword>
<sequence>MNDAINHTACETLFTQARTHNGWLDKPVSDAQLQAIWDLMKMGPTSANCSPARIVFVRSAEGKEKLGPTLSSGNLQKTMQAPVTAIVAWDRAFYDRLPTLFPHGDARSWFTSSPQLAEETAFRNSSLQAAYLIFACRALGLDTGPMSGFDREKVDAAFFADNGWKSNLLVNIGYGDPGKLYGRLPRLSFDEACLLA</sequence>
<proteinExistence type="inferred from homology"/>
<organism>
    <name type="scientific">Klebsiella pneumoniae (strain 342)</name>
    <dbReference type="NCBI Taxonomy" id="507522"/>
    <lineage>
        <taxon>Bacteria</taxon>
        <taxon>Pseudomonadati</taxon>
        <taxon>Pseudomonadota</taxon>
        <taxon>Gammaproteobacteria</taxon>
        <taxon>Enterobacterales</taxon>
        <taxon>Enterobacteriaceae</taxon>
        <taxon>Klebsiella/Raoultella group</taxon>
        <taxon>Klebsiella</taxon>
        <taxon>Klebsiella pneumoniae complex</taxon>
    </lineage>
</organism>
<name>RUTE_KLEP3</name>
<accession>B5XXN4</accession>
<feature type="chain" id="PRO_1000138697" description="Probable malonic semialdehyde reductase RutE">
    <location>
        <begin position="1"/>
        <end position="196"/>
    </location>
</feature>
<reference key="1">
    <citation type="journal article" date="2008" name="PLoS Genet.">
        <title>Complete genome sequence of the N2-fixing broad host range endophyte Klebsiella pneumoniae 342 and virulence predictions verified in mice.</title>
        <authorList>
            <person name="Fouts D.E."/>
            <person name="Tyler H.L."/>
            <person name="DeBoy R.T."/>
            <person name="Daugherty S."/>
            <person name="Ren Q."/>
            <person name="Badger J.H."/>
            <person name="Durkin A.S."/>
            <person name="Huot H."/>
            <person name="Shrivastava S."/>
            <person name="Kothari S."/>
            <person name="Dodson R.J."/>
            <person name="Mohamoud Y."/>
            <person name="Khouri H."/>
            <person name="Roesch L.F.W."/>
            <person name="Krogfelt K.A."/>
            <person name="Struve C."/>
            <person name="Triplett E.W."/>
            <person name="Methe B.A."/>
        </authorList>
    </citation>
    <scope>NUCLEOTIDE SEQUENCE [LARGE SCALE GENOMIC DNA]</scope>
    <source>
        <strain>342</strain>
    </source>
</reference>
<dbReference type="EC" id="1.1.1.298" evidence="1"/>
<dbReference type="EMBL" id="CP000964">
    <property type="protein sequence ID" value="ACI09953.1"/>
    <property type="molecule type" value="Genomic_DNA"/>
</dbReference>
<dbReference type="SMR" id="B5XXN4"/>
<dbReference type="KEGG" id="kpe:KPK_3524"/>
<dbReference type="HOGENOM" id="CLU_084441_0_0_6"/>
<dbReference type="Proteomes" id="UP000001734">
    <property type="component" value="Chromosome"/>
</dbReference>
<dbReference type="GO" id="GO:0035527">
    <property type="term" value="F:3-hydroxypropionate dehydrogenase (NADP+) activity"/>
    <property type="evidence" value="ECO:0007669"/>
    <property type="project" value="UniProtKB-UniRule"/>
</dbReference>
<dbReference type="GO" id="GO:0019740">
    <property type="term" value="P:nitrogen utilization"/>
    <property type="evidence" value="ECO:0007669"/>
    <property type="project" value="UniProtKB-UniRule"/>
</dbReference>
<dbReference type="GO" id="GO:0006212">
    <property type="term" value="P:uracil catabolic process"/>
    <property type="evidence" value="ECO:0007669"/>
    <property type="project" value="UniProtKB-UniRule"/>
</dbReference>
<dbReference type="CDD" id="cd02148">
    <property type="entry name" value="RutE-like"/>
    <property type="match status" value="1"/>
</dbReference>
<dbReference type="Gene3D" id="3.40.109.10">
    <property type="entry name" value="NADH Oxidase"/>
    <property type="match status" value="1"/>
</dbReference>
<dbReference type="HAMAP" id="MF_01204">
    <property type="entry name" value="Oxidoreductase_RutE_HadB"/>
    <property type="match status" value="1"/>
</dbReference>
<dbReference type="InterPro" id="IPR029479">
    <property type="entry name" value="Nitroreductase"/>
</dbReference>
<dbReference type="InterPro" id="IPR000415">
    <property type="entry name" value="Nitroreductase-like"/>
</dbReference>
<dbReference type="InterPro" id="IPR050461">
    <property type="entry name" value="Nitroreductase_HadB/RutE"/>
</dbReference>
<dbReference type="InterPro" id="IPR023936">
    <property type="entry name" value="RutE-like"/>
</dbReference>
<dbReference type="NCBIfam" id="NF003768">
    <property type="entry name" value="PRK05365.1"/>
    <property type="match status" value="1"/>
</dbReference>
<dbReference type="PANTHER" id="PTHR43543">
    <property type="entry name" value="MALONIC SEMIALDEHYDE REDUCTASE RUTE-RELATED"/>
    <property type="match status" value="1"/>
</dbReference>
<dbReference type="PANTHER" id="PTHR43543:SF1">
    <property type="entry name" value="MALONIC SEMIALDEHYDE REDUCTASE RUTE-RELATED"/>
    <property type="match status" value="1"/>
</dbReference>
<dbReference type="Pfam" id="PF00881">
    <property type="entry name" value="Nitroreductase"/>
    <property type="match status" value="1"/>
</dbReference>
<dbReference type="SUPFAM" id="SSF55469">
    <property type="entry name" value="FMN-dependent nitroreductase-like"/>
    <property type="match status" value="1"/>
</dbReference>
<comment type="function">
    <text evidence="1">May reduce toxic product malonic semialdehyde to 3-hydroxypropionic acid, which is excreted.</text>
</comment>
<comment type="catalytic activity">
    <reaction evidence="1">
        <text>3-hydroxypropanoate + NADP(+) = 3-oxopropanoate + NADPH + H(+)</text>
        <dbReference type="Rhea" id="RHEA:26438"/>
        <dbReference type="ChEBI" id="CHEBI:15378"/>
        <dbReference type="ChEBI" id="CHEBI:16510"/>
        <dbReference type="ChEBI" id="CHEBI:33190"/>
        <dbReference type="ChEBI" id="CHEBI:57783"/>
        <dbReference type="ChEBI" id="CHEBI:58349"/>
        <dbReference type="EC" id="1.1.1.298"/>
    </reaction>
</comment>
<comment type="cofactor">
    <cofactor evidence="1">
        <name>FMN</name>
        <dbReference type="ChEBI" id="CHEBI:58210"/>
    </cofactor>
</comment>
<comment type="similarity">
    <text evidence="1">Belongs to the nitroreductase family. HadB/RutE subfamily.</text>
</comment>
<protein>
    <recommendedName>
        <fullName evidence="1">Probable malonic semialdehyde reductase RutE</fullName>
        <ecNumber evidence="1">1.1.1.298</ecNumber>
    </recommendedName>
</protein>